<name>RNY_HELPY</name>
<reference key="1">
    <citation type="journal article" date="1997" name="Nature">
        <title>The complete genome sequence of the gastric pathogen Helicobacter pylori.</title>
        <authorList>
            <person name="Tomb J.-F."/>
            <person name="White O."/>
            <person name="Kerlavage A.R."/>
            <person name="Clayton R.A."/>
            <person name="Sutton G.G."/>
            <person name="Fleischmann R.D."/>
            <person name="Ketchum K.A."/>
            <person name="Klenk H.-P."/>
            <person name="Gill S.R."/>
            <person name="Dougherty B.A."/>
            <person name="Nelson K.E."/>
            <person name="Quackenbush J."/>
            <person name="Zhou L."/>
            <person name="Kirkness E.F."/>
            <person name="Peterson S.N."/>
            <person name="Loftus B.J."/>
            <person name="Richardson D.L."/>
            <person name="Dodson R.J."/>
            <person name="Khalak H.G."/>
            <person name="Glodek A."/>
            <person name="McKenney K."/>
            <person name="FitzGerald L.M."/>
            <person name="Lee N."/>
            <person name="Adams M.D."/>
            <person name="Hickey E.K."/>
            <person name="Berg D.E."/>
            <person name="Gocayne J.D."/>
            <person name="Utterback T.R."/>
            <person name="Peterson J.D."/>
            <person name="Kelley J.M."/>
            <person name="Cotton M.D."/>
            <person name="Weidman J.F."/>
            <person name="Fujii C."/>
            <person name="Bowman C."/>
            <person name="Watthey L."/>
            <person name="Wallin E."/>
            <person name="Hayes W.S."/>
            <person name="Borodovsky M."/>
            <person name="Karp P.D."/>
            <person name="Smith H.O."/>
            <person name="Fraser C.M."/>
            <person name="Venter J.C."/>
        </authorList>
    </citation>
    <scope>NUCLEOTIDE SEQUENCE [LARGE SCALE GENOMIC DNA]</scope>
    <source>
        <strain>ATCC 700392 / 26695</strain>
    </source>
</reference>
<evidence type="ECO:0000255" key="1">
    <source>
        <dbReference type="HAMAP-Rule" id="MF_00335"/>
    </source>
</evidence>
<evidence type="ECO:0000255" key="2">
    <source>
        <dbReference type="PROSITE-ProRule" id="PRU01175"/>
    </source>
</evidence>
<evidence type="ECO:0000305" key="3"/>
<dbReference type="EC" id="3.1.-.-" evidence="1"/>
<dbReference type="EMBL" id="AE000511">
    <property type="protein sequence ID" value="AAD07808.1"/>
    <property type="status" value="ALT_FRAME"/>
    <property type="molecule type" value="Genomic_DNA"/>
</dbReference>
<dbReference type="PIR" id="H64614">
    <property type="entry name" value="H64614"/>
</dbReference>
<dbReference type="SMR" id="O25455"/>
<dbReference type="IntAct" id="O25455">
    <property type="interactions" value="6"/>
</dbReference>
<dbReference type="MINT" id="O25455"/>
<dbReference type="STRING" id="85962.HP_0760"/>
<dbReference type="PaxDb" id="85962-C694_03910"/>
<dbReference type="DNASU" id="898987"/>
<dbReference type="EnsemblBacteria" id="AAD07808">
    <property type="protein sequence ID" value="AAD07808"/>
    <property type="gene ID" value="HP_0760"/>
</dbReference>
<dbReference type="KEGG" id="heo:C694_03910"/>
<dbReference type="KEGG" id="hpy:HP_0760"/>
<dbReference type="PATRIC" id="fig|85962.47.peg.811"/>
<dbReference type="eggNOG" id="COG1418">
    <property type="taxonomic scope" value="Bacteria"/>
</dbReference>
<dbReference type="InParanoid" id="O25455"/>
<dbReference type="PhylomeDB" id="O25455"/>
<dbReference type="Proteomes" id="UP000000429">
    <property type="component" value="Chromosome"/>
</dbReference>
<dbReference type="GO" id="GO:0005886">
    <property type="term" value="C:plasma membrane"/>
    <property type="evidence" value="ECO:0007669"/>
    <property type="project" value="UniProtKB-SubCell"/>
</dbReference>
<dbReference type="GO" id="GO:0003723">
    <property type="term" value="F:RNA binding"/>
    <property type="evidence" value="ECO:0007669"/>
    <property type="project" value="UniProtKB-UniRule"/>
</dbReference>
<dbReference type="GO" id="GO:0004521">
    <property type="term" value="F:RNA endonuclease activity"/>
    <property type="evidence" value="ECO:0007669"/>
    <property type="project" value="UniProtKB-UniRule"/>
</dbReference>
<dbReference type="GO" id="GO:0006402">
    <property type="term" value="P:mRNA catabolic process"/>
    <property type="evidence" value="ECO:0007669"/>
    <property type="project" value="UniProtKB-UniRule"/>
</dbReference>
<dbReference type="CDD" id="cd00077">
    <property type="entry name" value="HDc"/>
    <property type="match status" value="1"/>
</dbReference>
<dbReference type="CDD" id="cd22431">
    <property type="entry name" value="KH-I_RNaseY"/>
    <property type="match status" value="1"/>
</dbReference>
<dbReference type="FunFam" id="1.10.3210.10:FF:000013">
    <property type="entry name" value="Ribonuclease Y"/>
    <property type="match status" value="1"/>
</dbReference>
<dbReference type="FunFam" id="3.30.310.210:FF:000007">
    <property type="entry name" value="Ribonuclease Y"/>
    <property type="match status" value="1"/>
</dbReference>
<dbReference type="Gene3D" id="3.30.310.210">
    <property type="match status" value="1"/>
</dbReference>
<dbReference type="Gene3D" id="1.10.3210.10">
    <property type="entry name" value="Hypothetical protein af1432"/>
    <property type="match status" value="1"/>
</dbReference>
<dbReference type="HAMAP" id="MF_00335">
    <property type="entry name" value="RNase_Y"/>
    <property type="match status" value="1"/>
</dbReference>
<dbReference type="InterPro" id="IPR003607">
    <property type="entry name" value="HD/PDEase_dom"/>
</dbReference>
<dbReference type="InterPro" id="IPR006674">
    <property type="entry name" value="HD_domain"/>
</dbReference>
<dbReference type="InterPro" id="IPR006675">
    <property type="entry name" value="HDIG_dom"/>
</dbReference>
<dbReference type="InterPro" id="IPR004087">
    <property type="entry name" value="KH_dom"/>
</dbReference>
<dbReference type="InterPro" id="IPR004088">
    <property type="entry name" value="KH_dom_type_1"/>
</dbReference>
<dbReference type="InterPro" id="IPR036612">
    <property type="entry name" value="KH_dom_type_1_sf"/>
</dbReference>
<dbReference type="InterPro" id="IPR017705">
    <property type="entry name" value="Ribonuclease_Y"/>
</dbReference>
<dbReference type="InterPro" id="IPR022711">
    <property type="entry name" value="RNase_Y_N"/>
</dbReference>
<dbReference type="NCBIfam" id="TIGR00277">
    <property type="entry name" value="HDIG"/>
    <property type="match status" value="1"/>
</dbReference>
<dbReference type="NCBIfam" id="TIGR03319">
    <property type="entry name" value="RNase_Y"/>
    <property type="match status" value="1"/>
</dbReference>
<dbReference type="PANTHER" id="PTHR12826">
    <property type="entry name" value="RIBONUCLEASE Y"/>
    <property type="match status" value="1"/>
</dbReference>
<dbReference type="PANTHER" id="PTHR12826:SF15">
    <property type="entry name" value="RIBONUCLEASE Y"/>
    <property type="match status" value="1"/>
</dbReference>
<dbReference type="Pfam" id="PF01966">
    <property type="entry name" value="HD"/>
    <property type="match status" value="1"/>
</dbReference>
<dbReference type="Pfam" id="PF00013">
    <property type="entry name" value="KH_1"/>
    <property type="match status" value="1"/>
</dbReference>
<dbReference type="Pfam" id="PF12072">
    <property type="entry name" value="RNase_Y_N"/>
    <property type="match status" value="1"/>
</dbReference>
<dbReference type="SMART" id="SM00471">
    <property type="entry name" value="HDc"/>
    <property type="match status" value="1"/>
</dbReference>
<dbReference type="SMART" id="SM00322">
    <property type="entry name" value="KH"/>
    <property type="match status" value="1"/>
</dbReference>
<dbReference type="SUPFAM" id="SSF54791">
    <property type="entry name" value="Eukaryotic type KH-domain (KH-domain type I)"/>
    <property type="match status" value="1"/>
</dbReference>
<dbReference type="SUPFAM" id="SSF109604">
    <property type="entry name" value="HD-domain/PDEase-like"/>
    <property type="match status" value="1"/>
</dbReference>
<dbReference type="PROSITE" id="PS51831">
    <property type="entry name" value="HD"/>
    <property type="match status" value="1"/>
</dbReference>
<dbReference type="PROSITE" id="PS50084">
    <property type="entry name" value="KH_TYPE_1"/>
    <property type="match status" value="1"/>
</dbReference>
<organism>
    <name type="scientific">Helicobacter pylori (strain ATCC 700392 / 26695)</name>
    <name type="common">Campylobacter pylori</name>
    <dbReference type="NCBI Taxonomy" id="85962"/>
    <lineage>
        <taxon>Bacteria</taxon>
        <taxon>Pseudomonadati</taxon>
        <taxon>Campylobacterota</taxon>
        <taxon>Epsilonproteobacteria</taxon>
        <taxon>Campylobacterales</taxon>
        <taxon>Helicobacteraceae</taxon>
        <taxon>Helicobacter</taxon>
    </lineage>
</organism>
<protein>
    <recommendedName>
        <fullName evidence="1">Ribonuclease Y</fullName>
        <shortName evidence="1">RNase Y</shortName>
        <ecNumber evidence="1">3.1.-.-</ecNumber>
    </recommendedName>
</protein>
<proteinExistence type="inferred from homology"/>
<sequence length="529" mass="60130">MSSGLIYISLEVLVACLITALVMYYVMKKIYYARGQATLKSASAKAKLMEFQAKSFVEAEEIRMKSQECKLQQQYENKNLQLQTHFDKKEAHLKHLEAQHKEFVRDEKRYLEKEKKELEKERQILEQEKENFKKQRAVCKESQAKALDAMLNYMAYTKDEIKSMILEQLEEELEAQKSALIRRYEKEAKEEGKKKSYAILAEATARFAGNYAAENLTTRIALPCSDYIGRVIGKDGKNIEAFKKVSGVDIEFSEDSSELCLSSFNLYRREVASETLKILIEDGRIQPNRIEEVYHRVARNLEKELLSEGESVVLELELGAMEDELKILIGKMRYRSSFGQNALQHSKEVALLAGLIAEQLGGDKKLARRAGILHDIGKALTQELGRDHVNLGVEVCKRHKEDPVVINAIYAHHGHEEILSVECASVCAADALSAGRPGARRKSDEEYAKRMQALEEIALEFDGVEKAYAMESGRELRVIVKSNQVRDNQVPIIARKIAKKIEESAQYVGEVGVQVVRESRFKTTATLKQ</sequence>
<accession>O25455</accession>
<keyword id="KW-1003">Cell membrane</keyword>
<keyword id="KW-0255">Endonuclease</keyword>
<keyword id="KW-0378">Hydrolase</keyword>
<keyword id="KW-0472">Membrane</keyword>
<keyword id="KW-0540">Nuclease</keyword>
<keyword id="KW-1185">Reference proteome</keyword>
<keyword id="KW-0694">RNA-binding</keyword>
<keyword id="KW-0812">Transmembrane</keyword>
<keyword id="KW-1133">Transmembrane helix</keyword>
<gene>
    <name evidence="1" type="primary">rny</name>
    <name type="ordered locus">HP_0760</name>
</gene>
<feature type="chain" id="PRO_0000163774" description="Ribonuclease Y">
    <location>
        <begin position="1"/>
        <end position="529"/>
    </location>
</feature>
<feature type="transmembrane region" description="Helical" evidence="1">
    <location>
        <begin position="4"/>
        <end position="24"/>
    </location>
</feature>
<feature type="domain" description="KH" evidence="1">
    <location>
        <begin position="216"/>
        <end position="297"/>
    </location>
</feature>
<feature type="domain" description="HD" evidence="2">
    <location>
        <begin position="342"/>
        <end position="435"/>
    </location>
</feature>
<comment type="function">
    <text evidence="1">Endoribonuclease that initiates mRNA decay.</text>
</comment>
<comment type="subcellular location">
    <subcellularLocation>
        <location evidence="1">Cell membrane</location>
        <topology evidence="1">Single-pass membrane protein</topology>
    </subcellularLocation>
</comment>
<comment type="similarity">
    <text evidence="1">Belongs to the RNase Y family.</text>
</comment>
<comment type="sequence caution" evidence="3">
    <conflict type="frameshift">
        <sequence resource="EMBL-CDS" id="AAD07808"/>
    </conflict>
</comment>